<protein>
    <recommendedName>
        <fullName evidence="5">Vacuole membrane protein 1 homolog</fullName>
    </recommendedName>
    <alternativeName>
        <fullName>Transmembrane protein 49 homolog</fullName>
    </alternativeName>
</protein>
<gene>
    <name evidence="4 6" type="primary">vmp1</name>
    <name type="synonym">tmem49</name>
    <name type="ORF">DDB_G0285175</name>
</gene>
<comment type="function">
    <text evidence="1 3">Phospholipid scramblase involved in lipid homeostasis and membrane dynamics processes (By similarity). Required for autophagosome formation: participates in early stages of autophagosome biogenesis at the endoplasmic reticulum (ER) membrane by reequilibrating the leaflets of the ER as lipids are extracted (By similarity). In addition to autophagy, involved in other processes in which phospholipid scramblase activity is required (PubMed:18550798).</text>
</comment>
<comment type="catalytic activity">
    <reaction evidence="1">
        <text>a 1,2-diacyl-sn-glycero-3-phospho-L-serine(in) = a 1,2-diacyl-sn-glycero-3-phospho-L-serine(out)</text>
        <dbReference type="Rhea" id="RHEA:38663"/>
        <dbReference type="ChEBI" id="CHEBI:57262"/>
    </reaction>
</comment>
<comment type="catalytic activity">
    <reaction evidence="1">
        <text>cholesterol(in) = cholesterol(out)</text>
        <dbReference type="Rhea" id="RHEA:39747"/>
        <dbReference type="ChEBI" id="CHEBI:16113"/>
    </reaction>
</comment>
<comment type="catalytic activity">
    <reaction evidence="1">
        <text>a 1,2-diacyl-sn-glycero-3-phosphocholine(in) = a 1,2-diacyl-sn-glycero-3-phosphocholine(out)</text>
        <dbReference type="Rhea" id="RHEA:38571"/>
        <dbReference type="ChEBI" id="CHEBI:57643"/>
    </reaction>
</comment>
<comment type="catalytic activity">
    <reaction evidence="1">
        <text>a 1,2-diacyl-sn-glycero-3-phosphoethanolamine(in) = a 1,2-diacyl-sn-glycero-3-phosphoethanolamine(out)</text>
        <dbReference type="Rhea" id="RHEA:38895"/>
        <dbReference type="ChEBI" id="CHEBI:64612"/>
    </reaction>
</comment>
<comment type="subcellular location">
    <subcellularLocation>
        <location evidence="5">Membrane</location>
        <topology evidence="5">Multi-pass membrane protein</topology>
    </subcellularLocation>
    <subcellularLocation>
        <location evidence="3">Endoplasmic reticulum</location>
    </subcellularLocation>
</comment>
<comment type="disruption phenotype">
    <text evidence="3">Mutant cells display defects in the protein secretory pathway and in organelle biogenesis, and are deficient in their ability to initiate development upon starvation. The contractile vacuole, which is necessary to survive under hyperosmotic conditions, is non-functional in mutant cells.</text>
</comment>
<comment type="similarity">
    <text evidence="5">Belongs to the VMP1 family.</text>
</comment>
<proteinExistence type="inferred from homology"/>
<evidence type="ECO:0000250" key="1">
    <source>
        <dbReference type="UniProtKB" id="Q96GC9"/>
    </source>
</evidence>
<evidence type="ECO:0000255" key="2"/>
<evidence type="ECO:0000269" key="3">
    <source>
    </source>
</evidence>
<evidence type="ECO:0000303" key="4">
    <source>
    </source>
</evidence>
<evidence type="ECO:0000305" key="5"/>
<evidence type="ECO:0000312" key="6">
    <source>
        <dbReference type="dictyBase" id="DDB_G0285175"/>
    </source>
</evidence>
<dbReference type="EMBL" id="AAFI02000075">
    <property type="protein sequence ID" value="EAL64844.1"/>
    <property type="molecule type" value="Genomic_DNA"/>
</dbReference>
<dbReference type="RefSeq" id="XP_638348.1">
    <property type="nucleotide sequence ID" value="XM_633256.1"/>
</dbReference>
<dbReference type="FunCoup" id="Q54NL4">
    <property type="interactions" value="242"/>
</dbReference>
<dbReference type="STRING" id="44689.Q54NL4"/>
<dbReference type="PaxDb" id="44689-DDB0234044"/>
<dbReference type="EnsemblProtists" id="EAL64844">
    <property type="protein sequence ID" value="EAL64844"/>
    <property type="gene ID" value="DDB_G0285175"/>
</dbReference>
<dbReference type="GeneID" id="8624973"/>
<dbReference type="KEGG" id="ddi:DDB_G0285175"/>
<dbReference type="dictyBase" id="DDB_G0285175">
    <property type="gene designation" value="vmp1"/>
</dbReference>
<dbReference type="VEuPathDB" id="AmoebaDB:DDB_G0285175"/>
<dbReference type="eggNOG" id="KOG1109">
    <property type="taxonomic scope" value="Eukaryota"/>
</dbReference>
<dbReference type="HOGENOM" id="CLU_033298_0_1_1"/>
<dbReference type="InParanoid" id="Q54NL4"/>
<dbReference type="OMA" id="EEPYDKR"/>
<dbReference type="PhylomeDB" id="Q54NL4"/>
<dbReference type="PRO" id="PR:Q54NL4"/>
<dbReference type="Proteomes" id="UP000002195">
    <property type="component" value="Chromosome 4"/>
</dbReference>
<dbReference type="GO" id="GO:0012505">
    <property type="term" value="C:endomembrane system"/>
    <property type="evidence" value="ECO:0000318"/>
    <property type="project" value="GO_Central"/>
</dbReference>
<dbReference type="GO" id="GO:0005789">
    <property type="term" value="C:endoplasmic reticulum membrane"/>
    <property type="evidence" value="ECO:0000314"/>
    <property type="project" value="dictyBase"/>
</dbReference>
<dbReference type="GO" id="GO:0016020">
    <property type="term" value="C:membrane"/>
    <property type="evidence" value="ECO:0000318"/>
    <property type="project" value="GO_Central"/>
</dbReference>
<dbReference type="GO" id="GO:0031152">
    <property type="term" value="P:aggregation involved in sorocarp development"/>
    <property type="evidence" value="ECO:0000315"/>
    <property type="project" value="dictyBase"/>
</dbReference>
<dbReference type="GO" id="GO:0019954">
    <property type="term" value="P:asexual reproduction"/>
    <property type="evidence" value="ECO:0000315"/>
    <property type="project" value="dictyBase"/>
</dbReference>
<dbReference type="GO" id="GO:0048102">
    <property type="term" value="P:autophagic cell death"/>
    <property type="evidence" value="ECO:0000315"/>
    <property type="project" value="dictyBase"/>
</dbReference>
<dbReference type="GO" id="GO:0000045">
    <property type="term" value="P:autophagosome assembly"/>
    <property type="evidence" value="ECO:0000315"/>
    <property type="project" value="dictyBase"/>
</dbReference>
<dbReference type="GO" id="GO:0006914">
    <property type="term" value="P:autophagy"/>
    <property type="evidence" value="ECO:0000315"/>
    <property type="project" value="dictyBase"/>
</dbReference>
<dbReference type="GO" id="GO:0033298">
    <property type="term" value="P:contractile vacuole organization"/>
    <property type="evidence" value="ECO:0000315"/>
    <property type="project" value="dictyBase"/>
</dbReference>
<dbReference type="GO" id="GO:0007029">
    <property type="term" value="P:endoplasmic reticulum organization"/>
    <property type="evidence" value="ECO:0000315"/>
    <property type="project" value="dictyBase"/>
</dbReference>
<dbReference type="GO" id="GO:0030968">
    <property type="term" value="P:endoplasmic reticulum unfolded protein response"/>
    <property type="evidence" value="ECO:0000315"/>
    <property type="project" value="dictyBase"/>
</dbReference>
<dbReference type="GO" id="GO:0006887">
    <property type="term" value="P:exocytosis"/>
    <property type="evidence" value="ECO:0000315"/>
    <property type="project" value="dictyBase"/>
</dbReference>
<dbReference type="GO" id="GO:0007030">
    <property type="term" value="P:Golgi organization"/>
    <property type="evidence" value="ECO:0000315"/>
    <property type="project" value="dictyBase"/>
</dbReference>
<dbReference type="GO" id="GO:0006971">
    <property type="term" value="P:hypotonic response"/>
    <property type="evidence" value="ECO:0000315"/>
    <property type="project" value="dictyBase"/>
</dbReference>
<dbReference type="GO" id="GO:0006869">
    <property type="term" value="P:lipid transport"/>
    <property type="evidence" value="ECO:0007669"/>
    <property type="project" value="UniProtKB-KW"/>
</dbReference>
<dbReference type="GO" id="GO:0006907">
    <property type="term" value="P:pinocytosis"/>
    <property type="evidence" value="ECO:0000315"/>
    <property type="project" value="dictyBase"/>
</dbReference>
<accession>Q54NL4</accession>
<keyword id="KW-0175">Coiled coil</keyword>
<keyword id="KW-0256">Endoplasmic reticulum</keyword>
<keyword id="KW-0445">Lipid transport</keyword>
<keyword id="KW-0472">Membrane</keyword>
<keyword id="KW-1185">Reference proteome</keyword>
<keyword id="KW-0812">Transmembrane</keyword>
<keyword id="KW-1133">Transmembrane helix</keyword>
<keyword id="KW-0813">Transport</keyword>
<feature type="chain" id="PRO_0000328112" description="Vacuole membrane protein 1 homolog">
    <location>
        <begin position="1"/>
        <end position="403"/>
    </location>
</feature>
<feature type="transmembrane region" description="Helical" evidence="2">
    <location>
        <begin position="65"/>
        <end position="85"/>
    </location>
</feature>
<feature type="transmembrane region" description="Helical" evidence="2">
    <location>
        <begin position="102"/>
        <end position="122"/>
    </location>
</feature>
<feature type="transmembrane region" description="Helical" evidence="2">
    <location>
        <begin position="150"/>
        <end position="170"/>
    </location>
</feature>
<feature type="transmembrane region" description="Helical" evidence="2">
    <location>
        <begin position="175"/>
        <end position="195"/>
    </location>
</feature>
<feature type="transmembrane region" description="Helical" evidence="2">
    <location>
        <begin position="240"/>
        <end position="260"/>
    </location>
</feature>
<feature type="transmembrane region" description="Helical" evidence="2">
    <location>
        <begin position="263"/>
        <end position="283"/>
    </location>
</feature>
<feature type="transmembrane region" description="Helical" evidence="2">
    <location>
        <begin position="294"/>
        <end position="314"/>
    </location>
</feature>
<feature type="transmembrane region" description="Helical" evidence="2">
    <location>
        <begin position="348"/>
        <end position="368"/>
    </location>
</feature>
<feature type="coiled-coil region" evidence="2">
    <location>
        <begin position="7"/>
        <end position="33"/>
    </location>
</feature>
<name>VMP1_DICDI</name>
<organism>
    <name type="scientific">Dictyostelium discoideum</name>
    <name type="common">Social amoeba</name>
    <dbReference type="NCBI Taxonomy" id="44689"/>
    <lineage>
        <taxon>Eukaryota</taxon>
        <taxon>Amoebozoa</taxon>
        <taxon>Evosea</taxon>
        <taxon>Eumycetozoa</taxon>
        <taxon>Dictyostelia</taxon>
        <taxon>Dictyosteliales</taxon>
        <taxon>Dictyosteliaceae</taxon>
        <taxon>Dictyostelium</taxon>
    </lineage>
</organism>
<sequence>MGKSNTIVLSNEKDIQLRIQQLEERKEKRKNVKLLFSPIKTTKYFLYILKDTLVSGIRYFQTRPFLLFFIALFASLTFIAVYVPGEHQKYMGKYSDLISDCIWWVGLGVLSSIGLGTGLHTFVLYLGPHIAKVTLAATEWNSVNFNVYGANSFIQPATAMIGGVSFWMILQKVQWAALFWGAGTAIGELPPYFVARTARLKGLKLEQEKKLKEQQEKPIDEKDQPKKGLLERLSEKVPALIGNLGFFGILAFASIPNPLFDLAGITCGHFLVPFWKFFGATFIGKAVVKAHIQACFVILAFNMETLTMVISFIEDKIPFLKNKIQPILEKERQKLNSTVSANSPKSLVGLAWDCVLFLMISYFLMSIVDSSVQEYLIEKDNKKIELLKSKLEKQQPKETKKTK</sequence>
<reference key="1">
    <citation type="journal article" date="2005" name="Nature">
        <title>The genome of the social amoeba Dictyostelium discoideum.</title>
        <authorList>
            <person name="Eichinger L."/>
            <person name="Pachebat J.A."/>
            <person name="Gloeckner G."/>
            <person name="Rajandream M.A."/>
            <person name="Sucgang R."/>
            <person name="Berriman M."/>
            <person name="Song J."/>
            <person name="Olsen R."/>
            <person name="Szafranski K."/>
            <person name="Xu Q."/>
            <person name="Tunggal B."/>
            <person name="Kummerfeld S."/>
            <person name="Madera M."/>
            <person name="Konfortov B.A."/>
            <person name="Rivero F."/>
            <person name="Bankier A.T."/>
            <person name="Lehmann R."/>
            <person name="Hamlin N."/>
            <person name="Davies R."/>
            <person name="Gaudet P."/>
            <person name="Fey P."/>
            <person name="Pilcher K."/>
            <person name="Chen G."/>
            <person name="Saunders D."/>
            <person name="Sodergren E.J."/>
            <person name="Davis P."/>
            <person name="Kerhornou A."/>
            <person name="Nie X."/>
            <person name="Hall N."/>
            <person name="Anjard C."/>
            <person name="Hemphill L."/>
            <person name="Bason N."/>
            <person name="Farbrother P."/>
            <person name="Desany B."/>
            <person name="Just E."/>
            <person name="Morio T."/>
            <person name="Rost R."/>
            <person name="Churcher C.M."/>
            <person name="Cooper J."/>
            <person name="Haydock S."/>
            <person name="van Driessche N."/>
            <person name="Cronin A."/>
            <person name="Goodhead I."/>
            <person name="Muzny D.M."/>
            <person name="Mourier T."/>
            <person name="Pain A."/>
            <person name="Lu M."/>
            <person name="Harper D."/>
            <person name="Lindsay R."/>
            <person name="Hauser H."/>
            <person name="James K.D."/>
            <person name="Quiles M."/>
            <person name="Madan Babu M."/>
            <person name="Saito T."/>
            <person name="Buchrieser C."/>
            <person name="Wardroper A."/>
            <person name="Felder M."/>
            <person name="Thangavelu M."/>
            <person name="Johnson D."/>
            <person name="Knights A."/>
            <person name="Loulseged H."/>
            <person name="Mungall K.L."/>
            <person name="Oliver K."/>
            <person name="Price C."/>
            <person name="Quail M.A."/>
            <person name="Urushihara H."/>
            <person name="Hernandez J."/>
            <person name="Rabbinowitsch E."/>
            <person name="Steffen D."/>
            <person name="Sanders M."/>
            <person name="Ma J."/>
            <person name="Kohara Y."/>
            <person name="Sharp S."/>
            <person name="Simmonds M.N."/>
            <person name="Spiegler S."/>
            <person name="Tivey A."/>
            <person name="Sugano S."/>
            <person name="White B."/>
            <person name="Walker D."/>
            <person name="Woodward J.R."/>
            <person name="Winckler T."/>
            <person name="Tanaka Y."/>
            <person name="Shaulsky G."/>
            <person name="Schleicher M."/>
            <person name="Weinstock G.M."/>
            <person name="Rosenthal A."/>
            <person name="Cox E.C."/>
            <person name="Chisholm R.L."/>
            <person name="Gibbs R.A."/>
            <person name="Loomis W.F."/>
            <person name="Platzer M."/>
            <person name="Kay R.R."/>
            <person name="Williams J.G."/>
            <person name="Dear P.H."/>
            <person name="Noegel A.A."/>
            <person name="Barrell B.G."/>
            <person name="Kuspa A."/>
        </authorList>
    </citation>
    <scope>NUCLEOTIDE SEQUENCE [LARGE SCALE GENOMIC DNA]</scope>
    <source>
        <strain>AX4</strain>
    </source>
</reference>
<reference key="2">
    <citation type="journal article" date="2008" name="Mol. Biol. Cell">
        <title>Vacuole membrane protein 1 is an endoplasmic reticulum protein required for organelle biogenesis, protein secretion, and development.</title>
        <authorList>
            <person name="Calvo-Garrido J."/>
            <person name="Carilla-Latorre S."/>
            <person name="Lazaro-Dieguez F."/>
            <person name="Egea G."/>
            <person name="Escalante R."/>
        </authorList>
    </citation>
    <scope>FUNCTION</scope>
    <scope>SUBCELLULAR LOCATION</scope>
    <scope>DISRUPTION PHENOTYPE</scope>
</reference>